<sequence>MTTQRSPGLFRRLAHGSLVKQILVGLVLGILLAWISKPAAEAVGLLGTLFVGALKAVAPILVLMLVMASIANHQHGQKTNIRPILFLYLLGTFSAALAAVVFSFAFPSTLHLSSSAGDISPPSGIVEVMRGLVMSMVSNPIDALLKGNYIGILVWAIGLGFALRHGNETTKNLVNDMSNAVTFMVKLVIRFAPIGIFGLVSSTLATTGFSTLWGYAQLLVVLVGCMLLVALVVNPLLVWWKIRRNPFPLVLLCLRESGVYAFFTRSSAANIPVNMALCEKLNLDRDTYSVSIPLGATINMAGAAITITVLTLAAVNTLGIPVDLPTALLLSVVASLCACGASGVAGGSLLLIPLACNMFGISNDIAMQVVAVGFIIGVLQDSCETALNSSTDVLFTAAACQAEDDRLANSALRN</sequence>
<name>SSTT_ECOL5</name>
<feature type="initiator methionine" description="Removed" evidence="1">
    <location>
        <position position="1"/>
    </location>
</feature>
<feature type="chain" id="PRO_0000309089" description="Serine/threonine transporter SstT">
    <location>
        <begin position="2"/>
        <end position="414"/>
    </location>
</feature>
<feature type="topological domain" description="Cytoplasmic" evidence="1">
    <location>
        <begin position="2"/>
        <end position="15"/>
    </location>
</feature>
<feature type="transmembrane region" description="Helical" evidence="1">
    <location>
        <begin position="16"/>
        <end position="36"/>
    </location>
</feature>
<feature type="topological domain" description="Periplasmic" evidence="1">
    <location>
        <begin position="37"/>
        <end position="45"/>
    </location>
</feature>
<feature type="transmembrane region" description="Helical" evidence="1">
    <location>
        <begin position="46"/>
        <end position="66"/>
    </location>
</feature>
<feature type="topological domain" description="Cytoplasmic" evidence="1">
    <location>
        <begin position="67"/>
        <end position="83"/>
    </location>
</feature>
<feature type="transmembrane region" description="Helical" evidence="1">
    <location>
        <begin position="84"/>
        <end position="104"/>
    </location>
</feature>
<feature type="topological domain" description="Periplasmic" evidence="1">
    <location>
        <begin position="105"/>
        <end position="142"/>
    </location>
</feature>
<feature type="transmembrane region" description="Helical" evidence="1">
    <location>
        <begin position="143"/>
        <end position="163"/>
    </location>
</feature>
<feature type="topological domain" description="Cytoplasmic" evidence="1">
    <location>
        <begin position="164"/>
        <end position="179"/>
    </location>
</feature>
<feature type="transmembrane region" description="Helical" evidence="1">
    <location>
        <begin position="180"/>
        <end position="200"/>
    </location>
</feature>
<feature type="topological domain" description="Periplasmic" evidence="1">
    <location>
        <begin position="201"/>
        <end position="217"/>
    </location>
</feature>
<feature type="transmembrane region" description="Helical" evidence="1">
    <location>
        <begin position="218"/>
        <end position="238"/>
    </location>
</feature>
<feature type="topological domain" description="Cytoplasmic" evidence="1">
    <location>
        <begin position="239"/>
        <end position="299"/>
    </location>
</feature>
<feature type="transmembrane region" description="Helical" evidence="1">
    <location>
        <begin position="300"/>
        <end position="320"/>
    </location>
</feature>
<feature type="topological domain" description="Periplasmic" evidence="1">
    <location>
        <begin position="321"/>
        <end position="331"/>
    </location>
</feature>
<feature type="transmembrane region" description="Helical" evidence="1">
    <location>
        <begin position="332"/>
        <end position="352"/>
    </location>
</feature>
<feature type="topological domain" description="Cytoplasmic" evidence="1">
    <location>
        <begin position="353"/>
        <end position="414"/>
    </location>
</feature>
<dbReference type="EMBL" id="CP000247">
    <property type="protein sequence ID" value="ABG71162.1"/>
    <property type="molecule type" value="Genomic_DNA"/>
</dbReference>
<dbReference type="RefSeq" id="WP_000211655.1">
    <property type="nucleotide sequence ID" value="NC_008253.1"/>
</dbReference>
<dbReference type="SMR" id="Q0TD17"/>
<dbReference type="GeneID" id="93778898"/>
<dbReference type="KEGG" id="ecp:ECP_3180"/>
<dbReference type="HOGENOM" id="CLU_044581_0_0_6"/>
<dbReference type="Proteomes" id="UP000009182">
    <property type="component" value="Chromosome"/>
</dbReference>
<dbReference type="GO" id="GO:0005886">
    <property type="term" value="C:plasma membrane"/>
    <property type="evidence" value="ECO:0007669"/>
    <property type="project" value="UniProtKB-SubCell"/>
</dbReference>
<dbReference type="GO" id="GO:0005295">
    <property type="term" value="F:neutral L-amino acid:sodium symporter activity"/>
    <property type="evidence" value="ECO:0007669"/>
    <property type="project" value="TreeGrafter"/>
</dbReference>
<dbReference type="GO" id="GO:0032329">
    <property type="term" value="P:serine transport"/>
    <property type="evidence" value="ECO:0007669"/>
    <property type="project" value="InterPro"/>
</dbReference>
<dbReference type="GO" id="GO:0015826">
    <property type="term" value="P:threonine transport"/>
    <property type="evidence" value="ECO:0007669"/>
    <property type="project" value="InterPro"/>
</dbReference>
<dbReference type="FunFam" id="1.10.3860.10:FF:000003">
    <property type="entry name" value="Serine/threonine transporter sstT"/>
    <property type="match status" value="1"/>
</dbReference>
<dbReference type="Gene3D" id="1.10.3860.10">
    <property type="entry name" value="Sodium:dicarboxylate symporter"/>
    <property type="match status" value="1"/>
</dbReference>
<dbReference type="HAMAP" id="MF_01582">
    <property type="entry name" value="Ser_Thr_transp_SstT"/>
    <property type="match status" value="1"/>
</dbReference>
<dbReference type="InterPro" id="IPR001991">
    <property type="entry name" value="Na-dicarboxylate_symporter"/>
</dbReference>
<dbReference type="InterPro" id="IPR036458">
    <property type="entry name" value="Na:dicarbo_symporter_sf"/>
</dbReference>
<dbReference type="InterPro" id="IPR023025">
    <property type="entry name" value="Ser_Thr_transp_SstT"/>
</dbReference>
<dbReference type="NCBIfam" id="NF010151">
    <property type="entry name" value="PRK13628.1"/>
    <property type="match status" value="1"/>
</dbReference>
<dbReference type="PANTHER" id="PTHR42865">
    <property type="entry name" value="PROTON/GLUTAMATE-ASPARTATE SYMPORTER"/>
    <property type="match status" value="1"/>
</dbReference>
<dbReference type="PANTHER" id="PTHR42865:SF8">
    <property type="entry name" value="SERINE_THREONINE TRANSPORTER SSTT"/>
    <property type="match status" value="1"/>
</dbReference>
<dbReference type="Pfam" id="PF00375">
    <property type="entry name" value="SDF"/>
    <property type="match status" value="1"/>
</dbReference>
<dbReference type="PRINTS" id="PR00173">
    <property type="entry name" value="EDTRNSPORT"/>
</dbReference>
<dbReference type="SUPFAM" id="SSF118215">
    <property type="entry name" value="Proton glutamate symport protein"/>
    <property type="match status" value="1"/>
</dbReference>
<dbReference type="PROSITE" id="PS00713">
    <property type="entry name" value="NA_DICARBOXYL_SYMP_1"/>
    <property type="match status" value="1"/>
</dbReference>
<keyword id="KW-0029">Amino-acid transport</keyword>
<keyword id="KW-0997">Cell inner membrane</keyword>
<keyword id="KW-1003">Cell membrane</keyword>
<keyword id="KW-0472">Membrane</keyword>
<keyword id="KW-0769">Symport</keyword>
<keyword id="KW-0812">Transmembrane</keyword>
<keyword id="KW-1133">Transmembrane helix</keyword>
<keyword id="KW-0813">Transport</keyword>
<protein>
    <recommendedName>
        <fullName evidence="1">Serine/threonine transporter SstT</fullName>
    </recommendedName>
    <alternativeName>
        <fullName evidence="1">Na(+)/serine-threonine symporter</fullName>
    </alternativeName>
</protein>
<accession>Q0TD17</accession>
<proteinExistence type="inferred from homology"/>
<organism>
    <name type="scientific">Escherichia coli O6:K15:H31 (strain 536 / UPEC)</name>
    <dbReference type="NCBI Taxonomy" id="362663"/>
    <lineage>
        <taxon>Bacteria</taxon>
        <taxon>Pseudomonadati</taxon>
        <taxon>Pseudomonadota</taxon>
        <taxon>Gammaproteobacteria</taxon>
        <taxon>Enterobacterales</taxon>
        <taxon>Enterobacteriaceae</taxon>
        <taxon>Escherichia</taxon>
    </lineage>
</organism>
<evidence type="ECO:0000255" key="1">
    <source>
        <dbReference type="HAMAP-Rule" id="MF_01582"/>
    </source>
</evidence>
<gene>
    <name evidence="1" type="primary">sstT</name>
    <name type="ordered locus">ECP_3180</name>
</gene>
<reference key="1">
    <citation type="journal article" date="2006" name="Mol. Microbiol.">
        <title>Role of pathogenicity island-associated integrases in the genome plasticity of uropathogenic Escherichia coli strain 536.</title>
        <authorList>
            <person name="Hochhut B."/>
            <person name="Wilde C."/>
            <person name="Balling G."/>
            <person name="Middendorf B."/>
            <person name="Dobrindt U."/>
            <person name="Brzuszkiewicz E."/>
            <person name="Gottschalk G."/>
            <person name="Carniel E."/>
            <person name="Hacker J."/>
        </authorList>
    </citation>
    <scope>NUCLEOTIDE SEQUENCE [LARGE SCALE GENOMIC DNA]</scope>
    <source>
        <strain>536 / UPEC</strain>
    </source>
</reference>
<comment type="function">
    <text evidence="1">Involved in the import of serine and threonine into the cell, with the concomitant import of sodium (symport system).</text>
</comment>
<comment type="catalytic activity">
    <reaction evidence="1">
        <text>L-serine(in) + Na(+)(in) = L-serine(out) + Na(+)(out)</text>
        <dbReference type="Rhea" id="RHEA:29575"/>
        <dbReference type="ChEBI" id="CHEBI:29101"/>
        <dbReference type="ChEBI" id="CHEBI:33384"/>
    </reaction>
    <physiologicalReaction direction="right-to-left" evidence="1">
        <dbReference type="Rhea" id="RHEA:29577"/>
    </physiologicalReaction>
</comment>
<comment type="catalytic activity">
    <reaction evidence="1">
        <text>L-threonine(in) + Na(+)(in) = L-threonine(out) + Na(+)(out)</text>
        <dbReference type="Rhea" id="RHEA:69999"/>
        <dbReference type="ChEBI" id="CHEBI:29101"/>
        <dbReference type="ChEBI" id="CHEBI:57926"/>
    </reaction>
    <physiologicalReaction direction="right-to-left" evidence="1">
        <dbReference type="Rhea" id="RHEA:70001"/>
    </physiologicalReaction>
</comment>
<comment type="subcellular location">
    <subcellularLocation>
        <location evidence="1">Cell inner membrane</location>
        <topology evidence="1">Multi-pass membrane protein</topology>
    </subcellularLocation>
</comment>
<comment type="similarity">
    <text evidence="1">Belongs to the dicarboxylate/amino acid:cation symporter (DAACS) (TC 2.A.23) family.</text>
</comment>